<name>KKQ8_CANGA</name>
<dbReference type="EC" id="2.7.11.1"/>
<dbReference type="EMBL" id="CR380959">
    <property type="protein sequence ID" value="CAG62685.1"/>
    <property type="molecule type" value="Genomic_DNA"/>
</dbReference>
<dbReference type="RefSeq" id="XP_449709.1">
    <property type="nucleotide sequence ID" value="XM_449709.1"/>
</dbReference>
<dbReference type="SMR" id="Q6FJ85"/>
<dbReference type="FunCoup" id="Q6FJ85">
    <property type="interactions" value="231"/>
</dbReference>
<dbReference type="STRING" id="284593.Q6FJ85"/>
<dbReference type="EnsemblFungi" id="CAGL0M08360g-T">
    <property type="protein sequence ID" value="CAGL0M08360g-T-p1"/>
    <property type="gene ID" value="CAGL0M08360g"/>
</dbReference>
<dbReference type="KEGG" id="cgr:2891268"/>
<dbReference type="CGD" id="CAL0136865">
    <property type="gene designation" value="CAGL0M08360g"/>
</dbReference>
<dbReference type="VEuPathDB" id="FungiDB:CAGL0M08360g"/>
<dbReference type="eggNOG" id="KOG0590">
    <property type="taxonomic scope" value="Eukaryota"/>
</dbReference>
<dbReference type="HOGENOM" id="CLU_016904_0_0_1"/>
<dbReference type="InParanoid" id="Q6FJ85"/>
<dbReference type="OMA" id="EFYVFEE"/>
<dbReference type="Proteomes" id="UP000002428">
    <property type="component" value="Chromosome M"/>
</dbReference>
<dbReference type="GO" id="GO:0005829">
    <property type="term" value="C:cytosol"/>
    <property type="evidence" value="ECO:0007669"/>
    <property type="project" value="TreeGrafter"/>
</dbReference>
<dbReference type="GO" id="GO:0005524">
    <property type="term" value="F:ATP binding"/>
    <property type="evidence" value="ECO:0007669"/>
    <property type="project" value="UniProtKB-KW"/>
</dbReference>
<dbReference type="GO" id="GO:0106310">
    <property type="term" value="F:protein serine kinase activity"/>
    <property type="evidence" value="ECO:0007669"/>
    <property type="project" value="RHEA"/>
</dbReference>
<dbReference type="GO" id="GO:0004674">
    <property type="term" value="F:protein serine/threonine kinase activity"/>
    <property type="evidence" value="ECO:0007669"/>
    <property type="project" value="UniProtKB-KW"/>
</dbReference>
<dbReference type="GO" id="GO:0030003">
    <property type="term" value="P:intracellular monoatomic cation homeostasis"/>
    <property type="evidence" value="ECO:0007669"/>
    <property type="project" value="TreeGrafter"/>
</dbReference>
<dbReference type="Gene3D" id="1.10.510.10">
    <property type="entry name" value="Transferase(Phosphotransferase) domain 1"/>
    <property type="match status" value="1"/>
</dbReference>
<dbReference type="InterPro" id="IPR011009">
    <property type="entry name" value="Kinase-like_dom_sf"/>
</dbReference>
<dbReference type="InterPro" id="IPR000719">
    <property type="entry name" value="Prot_kinase_dom"/>
</dbReference>
<dbReference type="InterPro" id="IPR008271">
    <property type="entry name" value="Ser/Thr_kinase_AS"/>
</dbReference>
<dbReference type="PANTHER" id="PTHR24343">
    <property type="entry name" value="SERINE/THREONINE KINASE"/>
    <property type="match status" value="1"/>
</dbReference>
<dbReference type="PANTHER" id="PTHR24343:SF43">
    <property type="entry name" value="SERINE_THREONINE-PROTEIN KINASE HAL5-RELATED"/>
    <property type="match status" value="1"/>
</dbReference>
<dbReference type="Pfam" id="PF00069">
    <property type="entry name" value="Pkinase"/>
    <property type="match status" value="1"/>
</dbReference>
<dbReference type="SMART" id="SM00220">
    <property type="entry name" value="S_TKc"/>
    <property type="match status" value="1"/>
</dbReference>
<dbReference type="SUPFAM" id="SSF56112">
    <property type="entry name" value="Protein kinase-like (PK-like)"/>
    <property type="match status" value="1"/>
</dbReference>
<dbReference type="PROSITE" id="PS50011">
    <property type="entry name" value="PROTEIN_KINASE_DOM"/>
    <property type="match status" value="1"/>
</dbReference>
<dbReference type="PROSITE" id="PS00108">
    <property type="entry name" value="PROTEIN_KINASE_ST"/>
    <property type="match status" value="1"/>
</dbReference>
<accession>Q6FJ85</accession>
<evidence type="ECO:0000250" key="1"/>
<evidence type="ECO:0000255" key="2">
    <source>
        <dbReference type="PROSITE-ProRule" id="PRU00159"/>
    </source>
</evidence>
<evidence type="ECO:0000255" key="3">
    <source>
        <dbReference type="PROSITE-ProRule" id="PRU10027"/>
    </source>
</evidence>
<evidence type="ECO:0000256" key="4">
    <source>
        <dbReference type="SAM" id="MobiDB-lite"/>
    </source>
</evidence>
<evidence type="ECO:0000305" key="5"/>
<protein>
    <recommendedName>
        <fullName>Probable serine/threonine-protein kinase KKQ8</fullName>
        <ecNumber>2.7.11.1</ecNumber>
    </recommendedName>
</protein>
<reference key="1">
    <citation type="journal article" date="2004" name="Nature">
        <title>Genome evolution in yeasts.</title>
        <authorList>
            <person name="Dujon B."/>
            <person name="Sherman D."/>
            <person name="Fischer G."/>
            <person name="Durrens P."/>
            <person name="Casaregola S."/>
            <person name="Lafontaine I."/>
            <person name="de Montigny J."/>
            <person name="Marck C."/>
            <person name="Neuveglise C."/>
            <person name="Talla E."/>
            <person name="Goffard N."/>
            <person name="Frangeul L."/>
            <person name="Aigle M."/>
            <person name="Anthouard V."/>
            <person name="Babour A."/>
            <person name="Barbe V."/>
            <person name="Barnay S."/>
            <person name="Blanchin S."/>
            <person name="Beckerich J.-M."/>
            <person name="Beyne E."/>
            <person name="Bleykasten C."/>
            <person name="Boisrame A."/>
            <person name="Boyer J."/>
            <person name="Cattolico L."/>
            <person name="Confanioleri F."/>
            <person name="de Daruvar A."/>
            <person name="Despons L."/>
            <person name="Fabre E."/>
            <person name="Fairhead C."/>
            <person name="Ferry-Dumazet H."/>
            <person name="Groppi A."/>
            <person name="Hantraye F."/>
            <person name="Hennequin C."/>
            <person name="Jauniaux N."/>
            <person name="Joyet P."/>
            <person name="Kachouri R."/>
            <person name="Kerrest A."/>
            <person name="Koszul R."/>
            <person name="Lemaire M."/>
            <person name="Lesur I."/>
            <person name="Ma L."/>
            <person name="Muller H."/>
            <person name="Nicaud J.-M."/>
            <person name="Nikolski M."/>
            <person name="Oztas S."/>
            <person name="Ozier-Kalogeropoulos O."/>
            <person name="Pellenz S."/>
            <person name="Potier S."/>
            <person name="Richard G.-F."/>
            <person name="Straub M.-L."/>
            <person name="Suleau A."/>
            <person name="Swennen D."/>
            <person name="Tekaia F."/>
            <person name="Wesolowski-Louvel M."/>
            <person name="Westhof E."/>
            <person name="Wirth B."/>
            <person name="Zeniou-Meyer M."/>
            <person name="Zivanovic Y."/>
            <person name="Bolotin-Fukuhara M."/>
            <person name="Thierry A."/>
            <person name="Bouchier C."/>
            <person name="Caudron B."/>
            <person name="Scarpelli C."/>
            <person name="Gaillardin C."/>
            <person name="Weissenbach J."/>
            <person name="Wincker P."/>
            <person name="Souciet J.-L."/>
        </authorList>
    </citation>
    <scope>NUCLEOTIDE SEQUENCE [LARGE SCALE GENOMIC DNA]</scope>
    <source>
        <strain>ATCC 2001 / BCRC 20586 / JCM 3761 / NBRC 0622 / NRRL Y-65 / CBS 138</strain>
    </source>
</reference>
<organism>
    <name type="scientific">Candida glabrata (strain ATCC 2001 / BCRC 20586 / JCM 3761 / NBRC 0622 / NRRL Y-65 / CBS 138)</name>
    <name type="common">Yeast</name>
    <name type="synonym">Nakaseomyces glabratus</name>
    <dbReference type="NCBI Taxonomy" id="284593"/>
    <lineage>
        <taxon>Eukaryota</taxon>
        <taxon>Fungi</taxon>
        <taxon>Dikarya</taxon>
        <taxon>Ascomycota</taxon>
        <taxon>Saccharomycotina</taxon>
        <taxon>Saccharomycetes</taxon>
        <taxon>Saccharomycetales</taxon>
        <taxon>Saccharomycetaceae</taxon>
        <taxon>Nakaseomyces</taxon>
    </lineage>
</organism>
<gene>
    <name type="primary">KKQ8</name>
    <name type="ordered locus">CAGL0M08360g</name>
</gene>
<comment type="catalytic activity">
    <reaction>
        <text>L-seryl-[protein] + ATP = O-phospho-L-seryl-[protein] + ADP + H(+)</text>
        <dbReference type="Rhea" id="RHEA:17989"/>
        <dbReference type="Rhea" id="RHEA-COMP:9863"/>
        <dbReference type="Rhea" id="RHEA-COMP:11604"/>
        <dbReference type="ChEBI" id="CHEBI:15378"/>
        <dbReference type="ChEBI" id="CHEBI:29999"/>
        <dbReference type="ChEBI" id="CHEBI:30616"/>
        <dbReference type="ChEBI" id="CHEBI:83421"/>
        <dbReference type="ChEBI" id="CHEBI:456216"/>
        <dbReference type="EC" id="2.7.11.1"/>
    </reaction>
</comment>
<comment type="catalytic activity">
    <reaction>
        <text>L-threonyl-[protein] + ATP = O-phospho-L-threonyl-[protein] + ADP + H(+)</text>
        <dbReference type="Rhea" id="RHEA:46608"/>
        <dbReference type="Rhea" id="RHEA-COMP:11060"/>
        <dbReference type="Rhea" id="RHEA-COMP:11605"/>
        <dbReference type="ChEBI" id="CHEBI:15378"/>
        <dbReference type="ChEBI" id="CHEBI:30013"/>
        <dbReference type="ChEBI" id="CHEBI:30616"/>
        <dbReference type="ChEBI" id="CHEBI:61977"/>
        <dbReference type="ChEBI" id="CHEBI:456216"/>
        <dbReference type="EC" id="2.7.11.1"/>
    </reaction>
</comment>
<comment type="subcellular location">
    <subcellularLocation>
        <location evidence="1">Cytoplasm</location>
    </subcellularLocation>
</comment>
<comment type="similarity">
    <text evidence="5">Belongs to the protein kinase superfamily. CAMK Ser/Thr protein kinase family. NPR/HAL subfamily. HAL5 sub-subfamily.</text>
</comment>
<proteinExistence type="inferred from homology"/>
<feature type="chain" id="PRO_0000333585" description="Probable serine/threonine-protein kinase KKQ8">
    <location>
        <begin position="1"/>
        <end position="766"/>
    </location>
</feature>
<feature type="domain" description="Protein kinase" evidence="2">
    <location>
        <begin position="449"/>
        <end position="752"/>
    </location>
</feature>
<feature type="region of interest" description="Disordered" evidence="4">
    <location>
        <begin position="1"/>
        <end position="165"/>
    </location>
</feature>
<feature type="region of interest" description="Disordered" evidence="4">
    <location>
        <begin position="201"/>
        <end position="240"/>
    </location>
</feature>
<feature type="region of interest" description="Disordered" evidence="4">
    <location>
        <begin position="277"/>
        <end position="297"/>
    </location>
</feature>
<feature type="region of interest" description="Disordered" evidence="4">
    <location>
        <begin position="362"/>
        <end position="384"/>
    </location>
</feature>
<feature type="region of interest" description="Disordered" evidence="4">
    <location>
        <begin position="417"/>
        <end position="437"/>
    </location>
</feature>
<feature type="compositionally biased region" description="Low complexity" evidence="4">
    <location>
        <begin position="14"/>
        <end position="25"/>
    </location>
</feature>
<feature type="compositionally biased region" description="Basic and acidic residues" evidence="4">
    <location>
        <begin position="49"/>
        <end position="64"/>
    </location>
</feature>
<feature type="compositionally biased region" description="Polar residues" evidence="4">
    <location>
        <begin position="94"/>
        <end position="120"/>
    </location>
</feature>
<feature type="compositionally biased region" description="Basic and acidic residues" evidence="4">
    <location>
        <begin position="127"/>
        <end position="137"/>
    </location>
</feature>
<feature type="compositionally biased region" description="Polar residues" evidence="4">
    <location>
        <begin position="140"/>
        <end position="165"/>
    </location>
</feature>
<feature type="compositionally biased region" description="Polar residues" evidence="4">
    <location>
        <begin position="214"/>
        <end position="223"/>
    </location>
</feature>
<feature type="compositionally biased region" description="Basic and acidic residues" evidence="4">
    <location>
        <begin position="288"/>
        <end position="297"/>
    </location>
</feature>
<feature type="compositionally biased region" description="Acidic residues" evidence="4">
    <location>
        <begin position="372"/>
        <end position="382"/>
    </location>
</feature>
<feature type="compositionally biased region" description="Basic residues" evidence="4">
    <location>
        <begin position="419"/>
        <end position="430"/>
    </location>
</feature>
<feature type="active site" description="Proton acceptor" evidence="2 3">
    <location>
        <position position="603"/>
    </location>
</feature>
<feature type="binding site" evidence="2">
    <location>
        <begin position="455"/>
        <end position="463"/>
    </location>
    <ligand>
        <name>ATP</name>
        <dbReference type="ChEBI" id="CHEBI:30616"/>
    </ligand>
</feature>
<feature type="binding site" evidence="2">
    <location>
        <position position="493"/>
    </location>
    <ligand>
        <name>ATP</name>
        <dbReference type="ChEBI" id="CHEBI:30616"/>
    </ligand>
</feature>
<keyword id="KW-0067">ATP-binding</keyword>
<keyword id="KW-0963">Cytoplasm</keyword>
<keyword id="KW-0418">Kinase</keyword>
<keyword id="KW-0547">Nucleotide-binding</keyword>
<keyword id="KW-1185">Reference proteome</keyword>
<keyword id="KW-0723">Serine/threonine-protein kinase</keyword>
<keyword id="KW-0808">Transferase</keyword>
<sequence>MPEHEERHSHGVNRSLSLGSSMRSLFKSQRSRGPSDRGANGTPGPAQKVDIRVDTASASREHTPVVHKTPQSANPELQQPRHHLGLPNILKLNLTPTNSNPQSKSGSPVSQNTSQESLITDTDIEVEDYRPSKDSRRTVRNASPMSSNGNLPINANTVIGPDTSSNNIDSMLDGTGLRPFYEEADSSDYIENLRSFPLPTGHYAPGFIQPPKSPTSSRVPSRSNSRKGREHAGTVSAAQLPRYNETPGKCILDLEYFKLYEDGHHVHTLKVMTSVNSDANGNSHNHASKNDGHLDLPKGDDGSVVRQKSKFSLSGFFKPHSKEDIANADEKLKYAVSLLPRNKICSKVETDRDTFAPVFTKTRSHVQSGSDDSSDDDEELDDPSIPKIVNKNAAVGSQELKLINNLSEKIRMGLSTAAKNKHNQSSKHRTPSGAGVQDENQPAFADLYGKCVAVVGHGAYGVVKVCARTRDEKDDLPATKTYMDSKKIYFAVKELKPRPSDPIEKFSTRITSEFIIGHSLSHYYDKNGEQSAPNILSIIDLLEYNDTFIEVMEFCPAGDLYSLLTARKNKIGKPLHPLEADCFMKQLLKGIQFMHDHGVAHCDLKPENILLHPNGLLKICDFGTSCVFQTAWERHVHFQTGLQGSEPYVAPEEYNPKKEYDPRLVDCWSIGIVYCTMIMGHYLWRNAARGKDSLYDSFYEEMASKKEFYVFEELRHINQEINRLRRIALYQIFQPNPEKRISIDKLLQTGWMRHTKCCVPYKNIPR</sequence>